<dbReference type="EC" id="2.6.1.9"/>
<dbReference type="EMBL" id="M80245">
    <property type="protein sequence ID" value="AAA20867.1"/>
    <property type="molecule type" value="Genomic_DNA"/>
</dbReference>
<dbReference type="EMBL" id="AL009126">
    <property type="protein sequence ID" value="CAB14178.2"/>
    <property type="molecule type" value="Genomic_DNA"/>
</dbReference>
<dbReference type="EMBL" id="K01391">
    <property type="protein sequence ID" value="AAA22871.1"/>
    <property type="molecule type" value="Genomic_DNA"/>
</dbReference>
<dbReference type="PIR" id="A26532">
    <property type="entry name" value="A26532"/>
</dbReference>
<dbReference type="RefSeq" id="NP_390143.2">
    <property type="nucleotide sequence ID" value="NC_000964.3"/>
</dbReference>
<dbReference type="RefSeq" id="WP_004399129.1">
    <property type="nucleotide sequence ID" value="NZ_OZ025638.1"/>
</dbReference>
<dbReference type="SMR" id="P17731"/>
<dbReference type="FunCoup" id="P17731">
    <property type="interactions" value="594"/>
</dbReference>
<dbReference type="IntAct" id="P17731">
    <property type="interactions" value="1"/>
</dbReference>
<dbReference type="MINT" id="P17731"/>
<dbReference type="STRING" id="224308.BSU22620"/>
<dbReference type="jPOST" id="P17731"/>
<dbReference type="PaxDb" id="224308-BSU22620"/>
<dbReference type="EnsemblBacteria" id="CAB14178">
    <property type="protein sequence ID" value="CAB14178"/>
    <property type="gene ID" value="BSU_22620"/>
</dbReference>
<dbReference type="GeneID" id="939009"/>
<dbReference type="KEGG" id="bsu:BSU22620"/>
<dbReference type="eggNOG" id="COG0079">
    <property type="taxonomic scope" value="Bacteria"/>
</dbReference>
<dbReference type="InParanoid" id="P17731"/>
<dbReference type="OrthoDB" id="9813612at2"/>
<dbReference type="PhylomeDB" id="P17731"/>
<dbReference type="BioCyc" id="BSUB:BSU22620-MONOMER"/>
<dbReference type="BioCyc" id="MetaCyc:BSU22620-MONOMER"/>
<dbReference type="UniPathway" id="UPA00031">
    <property type="reaction ID" value="UER00012"/>
</dbReference>
<dbReference type="Proteomes" id="UP000001570">
    <property type="component" value="Chromosome"/>
</dbReference>
<dbReference type="GO" id="GO:0004400">
    <property type="term" value="F:histidinol-phosphate transaminase activity"/>
    <property type="evidence" value="ECO:0007669"/>
    <property type="project" value="UniProtKB-UniRule"/>
</dbReference>
<dbReference type="GO" id="GO:0030170">
    <property type="term" value="F:pyridoxal phosphate binding"/>
    <property type="evidence" value="ECO:0007669"/>
    <property type="project" value="InterPro"/>
</dbReference>
<dbReference type="GO" id="GO:0000105">
    <property type="term" value="P:L-histidine biosynthetic process"/>
    <property type="evidence" value="ECO:0007669"/>
    <property type="project" value="UniProtKB-UniRule"/>
</dbReference>
<dbReference type="CDD" id="cd00609">
    <property type="entry name" value="AAT_like"/>
    <property type="match status" value="1"/>
</dbReference>
<dbReference type="Gene3D" id="3.90.1150.10">
    <property type="entry name" value="Aspartate Aminotransferase, domain 1"/>
    <property type="match status" value="1"/>
</dbReference>
<dbReference type="Gene3D" id="3.40.640.10">
    <property type="entry name" value="Type I PLP-dependent aspartate aminotransferase-like (Major domain)"/>
    <property type="match status" value="1"/>
</dbReference>
<dbReference type="HAMAP" id="MF_01023">
    <property type="entry name" value="HisC_aminotrans_2"/>
    <property type="match status" value="1"/>
</dbReference>
<dbReference type="InterPro" id="IPR001917">
    <property type="entry name" value="Aminotrans_II_pyridoxalP_BS"/>
</dbReference>
<dbReference type="InterPro" id="IPR004839">
    <property type="entry name" value="Aminotransferase_I/II_large"/>
</dbReference>
<dbReference type="InterPro" id="IPR005861">
    <property type="entry name" value="HisP_aminotrans"/>
</dbReference>
<dbReference type="InterPro" id="IPR050106">
    <property type="entry name" value="HistidinolP_aminotransfase"/>
</dbReference>
<dbReference type="InterPro" id="IPR015424">
    <property type="entry name" value="PyrdxlP-dep_Trfase"/>
</dbReference>
<dbReference type="InterPro" id="IPR015421">
    <property type="entry name" value="PyrdxlP-dep_Trfase_major"/>
</dbReference>
<dbReference type="InterPro" id="IPR015422">
    <property type="entry name" value="PyrdxlP-dep_Trfase_small"/>
</dbReference>
<dbReference type="NCBIfam" id="TIGR01141">
    <property type="entry name" value="hisC"/>
    <property type="match status" value="1"/>
</dbReference>
<dbReference type="PANTHER" id="PTHR43643:SF3">
    <property type="entry name" value="HISTIDINOL-PHOSPHATE AMINOTRANSFERASE"/>
    <property type="match status" value="1"/>
</dbReference>
<dbReference type="PANTHER" id="PTHR43643">
    <property type="entry name" value="HISTIDINOL-PHOSPHATE AMINOTRANSFERASE 2"/>
    <property type="match status" value="1"/>
</dbReference>
<dbReference type="Pfam" id="PF00155">
    <property type="entry name" value="Aminotran_1_2"/>
    <property type="match status" value="1"/>
</dbReference>
<dbReference type="SUPFAM" id="SSF53383">
    <property type="entry name" value="PLP-dependent transferases"/>
    <property type="match status" value="1"/>
</dbReference>
<dbReference type="PROSITE" id="PS00599">
    <property type="entry name" value="AA_TRANSFER_CLASS_2"/>
    <property type="match status" value="1"/>
</dbReference>
<organism>
    <name type="scientific">Bacillus subtilis (strain 168)</name>
    <dbReference type="NCBI Taxonomy" id="224308"/>
    <lineage>
        <taxon>Bacteria</taxon>
        <taxon>Bacillati</taxon>
        <taxon>Bacillota</taxon>
        <taxon>Bacilli</taxon>
        <taxon>Bacillales</taxon>
        <taxon>Bacillaceae</taxon>
        <taxon>Bacillus</taxon>
    </lineage>
</organism>
<accession>P17731</accession>
<accession>O32008</accession>
<accession>Q45651</accession>
<evidence type="ECO:0000250" key="1"/>
<evidence type="ECO:0000305" key="2"/>
<feature type="chain" id="PRO_0000153308" description="Histidinol-phosphate aminotransferase">
    <location>
        <begin position="1"/>
        <end position="360"/>
    </location>
</feature>
<feature type="modified residue" description="N6-(pyridoxal phosphate)lysine" evidence="1">
    <location>
        <position position="223"/>
    </location>
</feature>
<feature type="sequence conflict" description="In Ref. 3; AAA22871." evidence="2" ref="3">
    <original>CSEAAKEALHHEIQQ</original>
    <variation>LLQRLQKRRFIMIQH</variation>
    <location>
        <begin position="43"/>
        <end position="57"/>
    </location>
</feature>
<feature type="sequence conflict" description="In Ref. 3; AAA22871." evidence="2" ref="3">
    <original>DGYSAALRT</original>
    <variation>EVLAPFGP</variation>
    <location>
        <begin position="63"/>
        <end position="71"/>
    </location>
</feature>
<feature type="sequence conflict" description="In Ref. 3; AAA22871." evidence="2" ref="3">
    <original>L</original>
    <variation>H</variation>
    <location>
        <position position="77"/>
    </location>
</feature>
<feature type="sequence conflict" description="In Ref. 1; AAA20867." evidence="2" ref="1">
    <original>D</original>
    <variation>Y</variation>
    <location>
        <position position="267"/>
    </location>
</feature>
<name>HIS8_BACSU</name>
<proteinExistence type="inferred from homology"/>
<keyword id="KW-0028">Amino-acid biosynthesis</keyword>
<keyword id="KW-0032">Aminotransferase</keyword>
<keyword id="KW-0368">Histidine biosynthesis</keyword>
<keyword id="KW-0663">Pyridoxal phosphate</keyword>
<keyword id="KW-1185">Reference proteome</keyword>
<keyword id="KW-0808">Transferase</keyword>
<sequence>MRIKEHLKQLKPYQPGKPIEAVKSEYGLDKVVKLASNENPYGCSEAAKEALHHEIQQLALYPDGYSAALRTRLSKHLNVSETSLIFGNGSDEIIQIICRAFLNDKTNTVTAAPTFPQYKHNAVIEGAEVREIALRPDGSHDLDAMLEAIDEQTQVVWICSPNNPTGTYTSEGELLAFLERVPSRVLVVLDEAYYEYVTAEDYPETVPLLSKYSNLMILRTFSKAYGLAALRVGYGIADENLIRQIEPAREPFNTSRLGQAAAIAALDDQAFIASCVEQNNAGLQQYYDFAKTHGLKCYPSQTNFVLIDFKRPADELFQALLEKGYIVRSGNALGFPTSLRITIGTKEQNEEILAILAEIL</sequence>
<protein>
    <recommendedName>
        <fullName>Histidinol-phosphate aminotransferase</fullName>
        <ecNumber>2.6.1.9</ecNumber>
    </recommendedName>
    <alternativeName>
        <fullName>Imidazole acetol-phosphate transaminase</fullName>
    </alternativeName>
</protein>
<gene>
    <name type="primary">hisC</name>
    <name type="synonym">hisH</name>
    <name type="ordered locus">BSU22620</name>
</gene>
<reference key="1">
    <citation type="journal article" date="1986" name="Gene">
        <title>The organization and nucleotide sequence of the Bacillus subtilis hisH, tyrA and aroE genes.</title>
        <authorList>
            <person name="Henner D.J."/>
            <person name="Band L."/>
            <person name="Flaggs G."/>
            <person name="Chen E."/>
        </authorList>
    </citation>
    <scope>NUCLEOTIDE SEQUENCE [GENOMIC DNA]</scope>
</reference>
<reference key="2">
    <citation type="journal article" date="1997" name="Nature">
        <title>The complete genome sequence of the Gram-positive bacterium Bacillus subtilis.</title>
        <authorList>
            <person name="Kunst F."/>
            <person name="Ogasawara N."/>
            <person name="Moszer I."/>
            <person name="Albertini A.M."/>
            <person name="Alloni G."/>
            <person name="Azevedo V."/>
            <person name="Bertero M.G."/>
            <person name="Bessieres P."/>
            <person name="Bolotin A."/>
            <person name="Borchert S."/>
            <person name="Borriss R."/>
            <person name="Boursier L."/>
            <person name="Brans A."/>
            <person name="Braun M."/>
            <person name="Brignell S.C."/>
            <person name="Bron S."/>
            <person name="Brouillet S."/>
            <person name="Bruschi C.V."/>
            <person name="Caldwell B."/>
            <person name="Capuano V."/>
            <person name="Carter N.M."/>
            <person name="Choi S.-K."/>
            <person name="Codani J.-J."/>
            <person name="Connerton I.F."/>
            <person name="Cummings N.J."/>
            <person name="Daniel R.A."/>
            <person name="Denizot F."/>
            <person name="Devine K.M."/>
            <person name="Duesterhoeft A."/>
            <person name="Ehrlich S.D."/>
            <person name="Emmerson P.T."/>
            <person name="Entian K.-D."/>
            <person name="Errington J."/>
            <person name="Fabret C."/>
            <person name="Ferrari E."/>
            <person name="Foulger D."/>
            <person name="Fritz C."/>
            <person name="Fujita M."/>
            <person name="Fujita Y."/>
            <person name="Fuma S."/>
            <person name="Galizzi A."/>
            <person name="Galleron N."/>
            <person name="Ghim S.-Y."/>
            <person name="Glaser P."/>
            <person name="Goffeau A."/>
            <person name="Golightly E.J."/>
            <person name="Grandi G."/>
            <person name="Guiseppi G."/>
            <person name="Guy B.J."/>
            <person name="Haga K."/>
            <person name="Haiech J."/>
            <person name="Harwood C.R."/>
            <person name="Henaut A."/>
            <person name="Hilbert H."/>
            <person name="Holsappel S."/>
            <person name="Hosono S."/>
            <person name="Hullo M.-F."/>
            <person name="Itaya M."/>
            <person name="Jones L.-M."/>
            <person name="Joris B."/>
            <person name="Karamata D."/>
            <person name="Kasahara Y."/>
            <person name="Klaerr-Blanchard M."/>
            <person name="Klein C."/>
            <person name="Kobayashi Y."/>
            <person name="Koetter P."/>
            <person name="Koningstein G."/>
            <person name="Krogh S."/>
            <person name="Kumano M."/>
            <person name="Kurita K."/>
            <person name="Lapidus A."/>
            <person name="Lardinois S."/>
            <person name="Lauber J."/>
            <person name="Lazarevic V."/>
            <person name="Lee S.-M."/>
            <person name="Levine A."/>
            <person name="Liu H."/>
            <person name="Masuda S."/>
            <person name="Mauel C."/>
            <person name="Medigue C."/>
            <person name="Medina N."/>
            <person name="Mellado R.P."/>
            <person name="Mizuno M."/>
            <person name="Moestl D."/>
            <person name="Nakai S."/>
            <person name="Noback M."/>
            <person name="Noone D."/>
            <person name="O'Reilly M."/>
            <person name="Ogawa K."/>
            <person name="Ogiwara A."/>
            <person name="Oudega B."/>
            <person name="Park S.-H."/>
            <person name="Parro V."/>
            <person name="Pohl T.M."/>
            <person name="Portetelle D."/>
            <person name="Porwollik S."/>
            <person name="Prescott A.M."/>
            <person name="Presecan E."/>
            <person name="Pujic P."/>
            <person name="Purnelle B."/>
            <person name="Rapoport G."/>
            <person name="Rey M."/>
            <person name="Reynolds S."/>
            <person name="Rieger M."/>
            <person name="Rivolta C."/>
            <person name="Rocha E."/>
            <person name="Roche B."/>
            <person name="Rose M."/>
            <person name="Sadaie Y."/>
            <person name="Sato T."/>
            <person name="Scanlan E."/>
            <person name="Schleich S."/>
            <person name="Schroeter R."/>
            <person name="Scoffone F."/>
            <person name="Sekiguchi J."/>
            <person name="Sekowska A."/>
            <person name="Seror S.J."/>
            <person name="Serror P."/>
            <person name="Shin B.-S."/>
            <person name="Soldo B."/>
            <person name="Sorokin A."/>
            <person name="Tacconi E."/>
            <person name="Takagi T."/>
            <person name="Takahashi H."/>
            <person name="Takemaru K."/>
            <person name="Takeuchi M."/>
            <person name="Tamakoshi A."/>
            <person name="Tanaka T."/>
            <person name="Terpstra P."/>
            <person name="Tognoni A."/>
            <person name="Tosato V."/>
            <person name="Uchiyama S."/>
            <person name="Vandenbol M."/>
            <person name="Vannier F."/>
            <person name="Vassarotti A."/>
            <person name="Viari A."/>
            <person name="Wambutt R."/>
            <person name="Wedler E."/>
            <person name="Wedler H."/>
            <person name="Weitzenegger T."/>
            <person name="Winters P."/>
            <person name="Wipat A."/>
            <person name="Yamamoto H."/>
            <person name="Yamane K."/>
            <person name="Yasumoto K."/>
            <person name="Yata K."/>
            <person name="Yoshida K."/>
            <person name="Yoshikawa H.-F."/>
            <person name="Zumstein E."/>
            <person name="Yoshikawa H."/>
            <person name="Danchin A."/>
        </authorList>
    </citation>
    <scope>NUCLEOTIDE SEQUENCE [LARGE SCALE GENOMIC DNA]</scope>
    <source>
        <strain>168</strain>
    </source>
</reference>
<reference key="3">
    <citation type="journal article" date="2009" name="Microbiology">
        <title>From a consortium sequence to a unified sequence: the Bacillus subtilis 168 reference genome a decade later.</title>
        <authorList>
            <person name="Barbe V."/>
            <person name="Cruveiller S."/>
            <person name="Kunst F."/>
            <person name="Lenoble P."/>
            <person name="Meurice G."/>
            <person name="Sekowska A."/>
            <person name="Vallenet D."/>
            <person name="Wang T."/>
            <person name="Moszer I."/>
            <person name="Medigue C."/>
            <person name="Danchin A."/>
        </authorList>
    </citation>
    <scope>SEQUENCE REVISION TO 267</scope>
</reference>
<reference key="4">
    <citation type="journal article" date="1985" name="Gene">
        <title>Nucleotide sequence of the Bacillus subtilis tryptophan operon.</title>
        <authorList>
            <person name="Henner D.J."/>
            <person name="Band L."/>
            <person name="Shimotsu H."/>
        </authorList>
    </citation>
    <scope>NUCLEOTIDE SEQUENCE [GENOMIC DNA] OF 1-110</scope>
    <source>
        <strain>168</strain>
    </source>
</reference>
<comment type="catalytic activity">
    <reaction>
        <text>L-histidinol phosphate + 2-oxoglutarate = 3-(imidazol-4-yl)-2-oxopropyl phosphate + L-glutamate</text>
        <dbReference type="Rhea" id="RHEA:23744"/>
        <dbReference type="ChEBI" id="CHEBI:16810"/>
        <dbReference type="ChEBI" id="CHEBI:29985"/>
        <dbReference type="ChEBI" id="CHEBI:57766"/>
        <dbReference type="ChEBI" id="CHEBI:57980"/>
        <dbReference type="EC" id="2.6.1.9"/>
    </reaction>
</comment>
<comment type="cofactor">
    <cofactor evidence="1">
        <name>pyridoxal 5'-phosphate</name>
        <dbReference type="ChEBI" id="CHEBI:597326"/>
    </cofactor>
</comment>
<comment type="pathway">
    <text>Amino-acid biosynthesis; L-histidine biosynthesis; L-histidine from 5-phospho-alpha-D-ribose 1-diphosphate: step 7/9.</text>
</comment>
<comment type="subunit">
    <text evidence="1">Homodimer.</text>
</comment>
<comment type="similarity">
    <text evidence="2">Belongs to the class-II pyridoxal-phosphate-dependent aminotransferase family. Histidinol-phosphate aminotransferase subfamily.</text>
</comment>